<keyword id="KW-0663">Pyridoxal phosphate</keyword>
<keyword id="KW-1185">Reference proteome</keyword>
<reference key="1">
    <citation type="journal article" date="2001" name="Nature">
        <title>Massive gene decay in the leprosy bacillus.</title>
        <authorList>
            <person name="Cole S.T."/>
            <person name="Eiglmeier K."/>
            <person name="Parkhill J."/>
            <person name="James K.D."/>
            <person name="Thomson N.R."/>
            <person name="Wheeler P.R."/>
            <person name="Honore N."/>
            <person name="Garnier T."/>
            <person name="Churcher C.M."/>
            <person name="Harris D.E."/>
            <person name="Mungall K.L."/>
            <person name="Basham D."/>
            <person name="Brown D."/>
            <person name="Chillingworth T."/>
            <person name="Connor R."/>
            <person name="Davies R.M."/>
            <person name="Devlin K."/>
            <person name="Duthoy S."/>
            <person name="Feltwell T."/>
            <person name="Fraser A."/>
            <person name="Hamlin N."/>
            <person name="Holroyd S."/>
            <person name="Hornsby T."/>
            <person name="Jagels K."/>
            <person name="Lacroix C."/>
            <person name="Maclean J."/>
            <person name="Moule S."/>
            <person name="Murphy L.D."/>
            <person name="Oliver K."/>
            <person name="Quail M.A."/>
            <person name="Rajandream M.A."/>
            <person name="Rutherford K.M."/>
            <person name="Rutter S."/>
            <person name="Seeger K."/>
            <person name="Simon S."/>
            <person name="Simmonds M."/>
            <person name="Skelton J."/>
            <person name="Squares R."/>
            <person name="Squares S."/>
            <person name="Stevens K."/>
            <person name="Taylor K."/>
            <person name="Whitehead S."/>
            <person name="Woodward J.R."/>
            <person name="Barrell B.G."/>
        </authorList>
    </citation>
    <scope>NUCLEOTIDE SEQUENCE [LARGE SCALE GENOMIC DNA]</scope>
    <source>
        <strain>TN</strain>
    </source>
</reference>
<name>PLPHP_MYCLE</name>
<feature type="chain" id="PRO_0000163202" description="Pyridoxal phosphate homeostasis protein">
    <location>
        <begin position="1"/>
        <end position="257"/>
    </location>
</feature>
<feature type="modified residue" description="N6-(pyridoxal phosphate)lysine" evidence="1">
    <location>
        <position position="47"/>
    </location>
</feature>
<dbReference type="EMBL" id="AL583920">
    <property type="protein sequence ID" value="CAC31300.1"/>
    <property type="status" value="ALT_INIT"/>
    <property type="molecule type" value="Genomic_DNA"/>
</dbReference>
<dbReference type="PIR" id="A87024">
    <property type="entry name" value="A87024"/>
</dbReference>
<dbReference type="SMR" id="Q9CCE2"/>
<dbReference type="STRING" id="272631.gene:17574745"/>
<dbReference type="KEGG" id="mle:ML0919"/>
<dbReference type="Leproma" id="ML0919"/>
<dbReference type="eggNOG" id="COG0325">
    <property type="taxonomic scope" value="Bacteria"/>
</dbReference>
<dbReference type="HOGENOM" id="CLU_059988_0_0_11"/>
<dbReference type="Proteomes" id="UP000000806">
    <property type="component" value="Chromosome"/>
</dbReference>
<dbReference type="GO" id="GO:0030170">
    <property type="term" value="F:pyridoxal phosphate binding"/>
    <property type="evidence" value="ECO:0007669"/>
    <property type="project" value="UniProtKB-UniRule"/>
</dbReference>
<dbReference type="Gene3D" id="3.20.20.10">
    <property type="entry name" value="Alanine racemase"/>
    <property type="match status" value="1"/>
</dbReference>
<dbReference type="HAMAP" id="MF_02087">
    <property type="entry name" value="PLP_homeostasis"/>
    <property type="match status" value="1"/>
</dbReference>
<dbReference type="InterPro" id="IPR001608">
    <property type="entry name" value="Ala_racemase_N"/>
</dbReference>
<dbReference type="InterPro" id="IPR029066">
    <property type="entry name" value="PLP-binding_barrel"/>
</dbReference>
<dbReference type="InterPro" id="IPR011078">
    <property type="entry name" value="PyrdxlP_homeostasis"/>
</dbReference>
<dbReference type="NCBIfam" id="TIGR00044">
    <property type="entry name" value="YggS family pyridoxal phosphate-dependent enzyme"/>
    <property type="match status" value="1"/>
</dbReference>
<dbReference type="PANTHER" id="PTHR10146">
    <property type="entry name" value="PROLINE SYNTHETASE CO-TRANSCRIBED BACTERIAL HOMOLOG PROTEIN"/>
    <property type="match status" value="1"/>
</dbReference>
<dbReference type="PANTHER" id="PTHR10146:SF14">
    <property type="entry name" value="PYRIDOXAL PHOSPHATE HOMEOSTASIS PROTEIN"/>
    <property type="match status" value="1"/>
</dbReference>
<dbReference type="Pfam" id="PF01168">
    <property type="entry name" value="Ala_racemase_N"/>
    <property type="match status" value="1"/>
</dbReference>
<dbReference type="PIRSF" id="PIRSF004848">
    <property type="entry name" value="YBL036c_PLPDEIII"/>
    <property type="match status" value="1"/>
</dbReference>
<dbReference type="SUPFAM" id="SSF51419">
    <property type="entry name" value="PLP-binding barrel"/>
    <property type="match status" value="1"/>
</dbReference>
<dbReference type="PROSITE" id="PS01211">
    <property type="entry name" value="UPF0001"/>
    <property type="match status" value="1"/>
</dbReference>
<organism>
    <name type="scientific">Mycobacterium leprae (strain TN)</name>
    <dbReference type="NCBI Taxonomy" id="272631"/>
    <lineage>
        <taxon>Bacteria</taxon>
        <taxon>Bacillati</taxon>
        <taxon>Actinomycetota</taxon>
        <taxon>Actinomycetes</taxon>
        <taxon>Mycobacteriales</taxon>
        <taxon>Mycobacteriaceae</taxon>
        <taxon>Mycobacterium</taxon>
    </lineage>
</organism>
<accession>Q9CCE2</accession>
<sequence length="257" mass="27547">MAADIDLQGDRESELMHALATVRSRLAAASQAAGRNVGEIELLPISKFFPATDVAILSRLGCRSVGESRAQEASTKAAEFAELLGVSREEKSSIHWHMVGQIQRNKVRSLAQWAHTAHSIDSLQLVAALDRAVAAALAGGRREQPLQVYVQISLDGDISRGGVNVTAPGAVDRVCAQVEESKSLELVGLMGIPPLGWNPDQAFEQLRLEHRRVLRSHPDAIGLSAGMSNDFEIAVKHGSTCVRVGTALLGPSRLRSP</sequence>
<evidence type="ECO:0000255" key="1">
    <source>
        <dbReference type="HAMAP-Rule" id="MF_02087"/>
    </source>
</evidence>
<evidence type="ECO:0000305" key="2"/>
<gene>
    <name type="ordered locus">ML0919</name>
</gene>
<comment type="function">
    <text evidence="1">Pyridoxal 5'-phosphate (PLP)-binding protein, which is involved in PLP homeostasis.</text>
</comment>
<comment type="similarity">
    <text evidence="1">Belongs to the pyridoxal phosphate-binding protein YggS/PROSC family.</text>
</comment>
<comment type="sequence caution" evidence="2">
    <conflict type="erroneous initiation">
        <sequence resource="EMBL-CDS" id="CAC31300"/>
    </conflict>
</comment>
<proteinExistence type="inferred from homology"/>
<protein>
    <recommendedName>
        <fullName evidence="1">Pyridoxal phosphate homeostasis protein</fullName>
        <shortName evidence="1">PLP homeostasis protein</shortName>
    </recommendedName>
</protein>